<dbReference type="EC" id="2.4.1.69" evidence="2"/>
<dbReference type="EC" id="2.4.1.344" evidence="3"/>
<dbReference type="EMBL" id="AY219629">
    <property type="protein sequence ID" value="AAO43071.1"/>
    <property type="molecule type" value="Genomic_DNA"/>
</dbReference>
<dbReference type="SMR" id="Q866D9"/>
<dbReference type="CAZy" id="GT11">
    <property type="family name" value="Glycosyltransferase Family 11"/>
</dbReference>
<dbReference type="GlyCosmos" id="Q866D9">
    <property type="glycosylation" value="3 sites, No reported glycans"/>
</dbReference>
<dbReference type="UniPathway" id="UPA00378"/>
<dbReference type="GO" id="GO:0032580">
    <property type="term" value="C:Golgi cisterna membrane"/>
    <property type="evidence" value="ECO:0007669"/>
    <property type="project" value="UniProtKB-SubCell"/>
</dbReference>
<dbReference type="GO" id="GO:0031127">
    <property type="term" value="F:alpha-(1,2)-fucosyltransferase activity"/>
    <property type="evidence" value="ECO:0000250"/>
    <property type="project" value="UniProtKB"/>
</dbReference>
<dbReference type="GO" id="GO:0008107">
    <property type="term" value="F:galactoside 2-alpha-L-fucosyltransferase activity"/>
    <property type="evidence" value="ECO:0007669"/>
    <property type="project" value="UniProtKB-EC"/>
</dbReference>
<dbReference type="GO" id="GO:0005975">
    <property type="term" value="P:carbohydrate metabolic process"/>
    <property type="evidence" value="ECO:0007669"/>
    <property type="project" value="InterPro"/>
</dbReference>
<dbReference type="GO" id="GO:0036065">
    <property type="term" value="P:fucosylation"/>
    <property type="evidence" value="ECO:0000250"/>
    <property type="project" value="UniProtKB"/>
</dbReference>
<dbReference type="GO" id="GO:0006629">
    <property type="term" value="P:lipid metabolic process"/>
    <property type="evidence" value="ECO:0007669"/>
    <property type="project" value="UniProtKB-KW"/>
</dbReference>
<dbReference type="GO" id="GO:0021772">
    <property type="term" value="P:olfactory bulb development"/>
    <property type="evidence" value="ECO:0000250"/>
    <property type="project" value="UniProtKB"/>
</dbReference>
<dbReference type="GO" id="GO:0001954">
    <property type="term" value="P:positive regulation of cell-matrix adhesion"/>
    <property type="evidence" value="ECO:0000250"/>
    <property type="project" value="UniProtKB"/>
</dbReference>
<dbReference type="GO" id="GO:0010595">
    <property type="term" value="P:positive regulation of endothelial cell migration"/>
    <property type="evidence" value="ECO:0000250"/>
    <property type="project" value="UniProtKB"/>
</dbReference>
<dbReference type="GO" id="GO:1904906">
    <property type="term" value="P:positive regulation of endothelial cell-matrix adhesion via fibronectin"/>
    <property type="evidence" value="ECO:0000250"/>
    <property type="project" value="UniProtKB"/>
</dbReference>
<dbReference type="GO" id="GO:1903672">
    <property type="term" value="P:positive regulation of sprouting angiogenesis"/>
    <property type="evidence" value="ECO:0000250"/>
    <property type="project" value="UniProtKB"/>
</dbReference>
<dbReference type="GO" id="GO:0006486">
    <property type="term" value="P:protein glycosylation"/>
    <property type="evidence" value="ECO:0000250"/>
    <property type="project" value="UniProtKB"/>
</dbReference>
<dbReference type="GO" id="GO:0030155">
    <property type="term" value="P:regulation of cell adhesion"/>
    <property type="evidence" value="ECO:0000250"/>
    <property type="project" value="UniProtKB"/>
</dbReference>
<dbReference type="GO" id="GO:0001936">
    <property type="term" value="P:regulation of endothelial cell proliferation"/>
    <property type="evidence" value="ECO:0000250"/>
    <property type="project" value="UniProtKB"/>
</dbReference>
<dbReference type="CDD" id="cd11301">
    <property type="entry name" value="Fut1_Fut2_like"/>
    <property type="match status" value="1"/>
</dbReference>
<dbReference type="InterPro" id="IPR002516">
    <property type="entry name" value="Glyco_trans_11"/>
</dbReference>
<dbReference type="PANTHER" id="PTHR11927">
    <property type="entry name" value="GALACTOSIDE 2-L-FUCOSYLTRANSFERASE"/>
    <property type="match status" value="1"/>
</dbReference>
<dbReference type="PANTHER" id="PTHR11927:SF4">
    <property type="entry name" value="GALACTOSIDE ALPHA-(1,2)-FUCOSYLTRANSFERASE 1"/>
    <property type="match status" value="1"/>
</dbReference>
<dbReference type="Pfam" id="PF01531">
    <property type="entry name" value="Glyco_transf_11"/>
    <property type="match status" value="1"/>
</dbReference>
<gene>
    <name evidence="3" type="primary">FUT1</name>
</gene>
<accession>Q866D9</accession>
<comment type="function">
    <text evidence="2 3">Catalyzes the transfer of L-fucose, from a guanosine diphosphate-beta-L-fucose, to the terminal galactose residue of glycoconjugates through an alpha(1,2) linkage leading to H antigen synthesis that is an intermediate substrate in the synthesis of ABO blood group antigens. H antigen is essential for maturation of the glomerular layer of the main olfactory bulb, in cell migration and early cell-cell contacts during tumor associated angiogenesis (By similarity). Preferentially fucosylates soluble lactose and to a lesser extent fucosylates glycolipids gangliosides GA1 and GM1a (By similarity).</text>
</comment>
<comment type="catalytic activity">
    <reaction evidence="3">
        <text>a beta-D-galactosyl-(1-&gt;4)-N-acetyl-beta-D-glucosaminyl derivative + GDP-beta-L-fucose = an alpha-L-Fuc-(1-&gt;2)-beta-D-Gal-(1-&gt;4)-beta-D-GlcNAc derivative + GDP + H(+)</text>
        <dbReference type="Rhea" id="RHEA:50668"/>
        <dbReference type="ChEBI" id="CHEBI:15378"/>
        <dbReference type="ChEBI" id="CHEBI:57273"/>
        <dbReference type="ChEBI" id="CHEBI:58189"/>
        <dbReference type="ChEBI" id="CHEBI:133507"/>
        <dbReference type="ChEBI" id="CHEBI:133510"/>
        <dbReference type="EC" id="2.4.1.344"/>
    </reaction>
</comment>
<comment type="catalytic activity">
    <reaction evidence="2">
        <text>a ganglioside GA1 + GDP-beta-L-fucose = a ganglioside Fuc-GA1 + GDP + H(+)</text>
        <dbReference type="Rhea" id="RHEA:48320"/>
        <dbReference type="ChEBI" id="CHEBI:15378"/>
        <dbReference type="ChEBI" id="CHEBI:57273"/>
        <dbReference type="ChEBI" id="CHEBI:58189"/>
        <dbReference type="ChEBI" id="CHEBI:88069"/>
        <dbReference type="ChEBI" id="CHEBI:90262"/>
    </reaction>
    <physiologicalReaction direction="left-to-right" evidence="2">
        <dbReference type="Rhea" id="RHEA:48321"/>
    </physiologicalReaction>
</comment>
<comment type="catalytic activity">
    <reaction evidence="2">
        <text>a beta-D-Gal-(1-&gt;3)-beta-D-GlcNAc-(1-&gt;3)-beta-D-Gal-(1-&gt;4)-beta-D-Glc-(1&lt;-&gt;1')-Cer(d18:1(4E)) + GDP-beta-L-fucose = alpha-L-fucosyl-(1-&gt;2)- beta-D-galactosyl-(1-&gt;3)-N-acetyl-beta-D-glucosaminyl-(1-&gt;3)-beta-D-galactosyl-(1-&gt;4)-beta-D-glucosyl-(1&lt;-&gt;1')-N-acylsphing-4-enine + GDP + H(+)</text>
        <dbReference type="Rhea" id="RHEA:32175"/>
        <dbReference type="ChEBI" id="CHEBI:15378"/>
        <dbReference type="ChEBI" id="CHEBI:17292"/>
        <dbReference type="ChEBI" id="CHEBI:28743"/>
        <dbReference type="ChEBI" id="CHEBI:57273"/>
        <dbReference type="ChEBI" id="CHEBI:58189"/>
        <dbReference type="EC" id="2.4.1.69"/>
    </reaction>
    <physiologicalReaction direction="left-to-right" evidence="2">
        <dbReference type="Rhea" id="RHEA:32176"/>
    </physiologicalReaction>
</comment>
<comment type="catalytic activity">
    <reaction evidence="2">
        <text>a neolactoside nLc4Cer(d18:1(4E)) + GDP-beta-L-fucose = a neolactoside IV(2)-alpha-Fuc-nLc4Cer(d18:1(4E)) + GDP + H(+)</text>
        <dbReference type="Rhea" id="RHEA:48304"/>
        <dbReference type="ChEBI" id="CHEBI:15378"/>
        <dbReference type="ChEBI" id="CHEBI:17006"/>
        <dbReference type="ChEBI" id="CHEBI:28691"/>
        <dbReference type="ChEBI" id="CHEBI:57273"/>
        <dbReference type="ChEBI" id="CHEBI:58189"/>
    </reaction>
    <physiologicalReaction direction="left-to-right" evidence="2">
        <dbReference type="Rhea" id="RHEA:48305"/>
    </physiologicalReaction>
</comment>
<comment type="catalytic activity">
    <reaction evidence="1">
        <text>a ganglioside GM1 + GDP-beta-L-fucose = a ganglioside Fuc-GM1 + GDP + H(+)</text>
        <dbReference type="Rhea" id="RHEA:48292"/>
        <dbReference type="ChEBI" id="CHEBI:15378"/>
        <dbReference type="ChEBI" id="CHEBI:57273"/>
        <dbReference type="ChEBI" id="CHEBI:58189"/>
        <dbReference type="ChEBI" id="CHEBI:82639"/>
        <dbReference type="ChEBI" id="CHEBI:90189"/>
    </reaction>
    <physiologicalReaction direction="left-to-right" evidence="1">
        <dbReference type="Rhea" id="RHEA:48293"/>
    </physiologicalReaction>
</comment>
<comment type="catalytic activity">
    <reaction evidence="1">
        <text>beta-D-galactosyl-(1-&gt;3)-N-acetyl-D-galactosamine + GDP-beta-L-fucose = alpha-L-fucosyl-(1-&gt;2)-beta-D-galactosyl-(1-&gt;3)-N-acetyl-D-galactosamine + GDP + H(+)</text>
        <dbReference type="Rhea" id="RHEA:62964"/>
        <dbReference type="ChEBI" id="CHEBI:15378"/>
        <dbReference type="ChEBI" id="CHEBI:57273"/>
        <dbReference type="ChEBI" id="CHEBI:58189"/>
        <dbReference type="ChEBI" id="CHEBI:84728"/>
        <dbReference type="ChEBI" id="CHEBI:546807"/>
    </reaction>
    <physiologicalReaction direction="left-to-right" evidence="1">
        <dbReference type="Rhea" id="RHEA:62965"/>
    </physiologicalReaction>
</comment>
<comment type="pathway">
    <text evidence="3">Protein modification; protein glycosylation.</text>
</comment>
<comment type="subcellular location">
    <subcellularLocation>
        <location evidence="2">Golgi apparatus</location>
        <location evidence="2">Golgi stack membrane</location>
        <topology evidence="2">Single-pass type II membrane protein</topology>
    </subcellularLocation>
    <text evidence="2">Membrane-bound form in trans cisternae of Golgi.</text>
</comment>
<comment type="similarity">
    <text evidence="5">Belongs to the glycosyltransferase 11 family.</text>
</comment>
<protein>
    <recommendedName>
        <fullName evidence="3">Galactoside alpha-(1,2)-fucosyltransferase 1</fullName>
    </recommendedName>
    <alternativeName>
        <fullName>Alpha(1,2)FT 1</fullName>
    </alternativeName>
    <alternativeName>
        <fullName>Fucosyltransferase 1</fullName>
    </alternativeName>
    <alternativeName>
        <fullName>GDP-L-fucose:beta-D-galactoside 2-alpha-L-fucosyltransferase 1</fullName>
    </alternativeName>
    <alternativeName>
        <fullName evidence="2">Type 1 galactoside alpha-(1,2)-fucosyltransferase FUT1</fullName>
        <ecNumber evidence="2">2.4.1.69</ecNumber>
    </alternativeName>
    <alternativeName>
        <fullName evidence="3">Type 2 galactoside alpha-(1,2)-fucosyltransferase FUT1</fullName>
        <ecNumber evidence="3">2.4.1.344</ecNumber>
    </alternativeName>
</protein>
<name>FUT1_MICHU</name>
<organism>
    <name type="scientific">Mico humeralifer</name>
    <name type="common">Black and white tassel-ear marmoset</name>
    <name type="synonym">Callithrix humeralifera</name>
    <dbReference type="NCBI Taxonomy" id="52232"/>
    <lineage>
        <taxon>Eukaryota</taxon>
        <taxon>Metazoa</taxon>
        <taxon>Chordata</taxon>
        <taxon>Craniata</taxon>
        <taxon>Vertebrata</taxon>
        <taxon>Euteleostomi</taxon>
        <taxon>Mammalia</taxon>
        <taxon>Eutheria</taxon>
        <taxon>Euarchontoglires</taxon>
        <taxon>Primates</taxon>
        <taxon>Haplorrhini</taxon>
        <taxon>Platyrrhini</taxon>
        <taxon>Cebidae</taxon>
        <taxon>Callitrichinae</taxon>
        <taxon>Mico</taxon>
    </lineage>
</organism>
<sequence length="365" mass="41205">MWPLSHRHLCLAFLLVCVLSAISFFLHIYQDSIRHGLGLSILCPDRLVTAPVAIFCLPDSPMSPNTSSPCPQHPASLSGTWTIYPDGRFGNQMGQYATLLALAQLNGRRAFILPAMHATLAPVFRITLPVLAPEVDSSTPWRELQLHDWMSEEYADLGDPFLKLSGFPCSWTFFHHLREQIRSEFTLHDHLREEAQSVLRRLRLGRSGDRPRTFVGVHVRRGDYLQVMPQRWKGVVGNSAYLREAMDWFRARHEAPVFVVTSNGMEWCRENIDASKGDVMFAGDGQEASPWKDFALLTQCNHTIMTIGTFGFWAAYLAGGDTVYLANFTLPDSEFLKIFKPEAAFLPEWVGINADLSPLWTLAEP</sequence>
<keyword id="KW-0325">Glycoprotein</keyword>
<keyword id="KW-0328">Glycosyltransferase</keyword>
<keyword id="KW-0333">Golgi apparatus</keyword>
<keyword id="KW-0443">Lipid metabolism</keyword>
<keyword id="KW-0472">Membrane</keyword>
<keyword id="KW-0735">Signal-anchor</keyword>
<keyword id="KW-0808">Transferase</keyword>
<keyword id="KW-0812">Transmembrane</keyword>
<keyword id="KW-1133">Transmembrane helix</keyword>
<proteinExistence type="inferred from homology"/>
<feature type="chain" id="PRO_0000149092" description="Galactoside alpha-(1,2)-fucosyltransferase 1">
    <location>
        <begin position="1"/>
        <end position="365"/>
    </location>
</feature>
<feature type="topological domain" description="Cytoplasmic" evidence="4">
    <location>
        <begin position="1"/>
        <end position="8"/>
    </location>
</feature>
<feature type="transmembrane region" description="Helical; Signal-anchor for type II membrane protein" evidence="4">
    <location>
        <begin position="9"/>
        <end position="25"/>
    </location>
</feature>
<feature type="topological domain" description="Lumenal" evidence="4">
    <location>
        <begin position="26"/>
        <end position="365"/>
    </location>
</feature>
<feature type="glycosylation site" description="N-linked (GlcNAc...) asparagine" evidence="4">
    <location>
        <position position="65"/>
    </location>
</feature>
<feature type="glycosylation site" description="N-linked (GlcNAc...) asparagine" evidence="4">
    <location>
        <position position="301"/>
    </location>
</feature>
<feature type="glycosylation site" description="N-linked (GlcNAc...) asparagine" evidence="4">
    <location>
        <position position="327"/>
    </location>
</feature>
<reference key="1">
    <citation type="submission" date="2003-01" db="EMBL/GenBank/DDBJ databases">
        <title>Molecular evolution of the H (FUT1) gene in New World monkeys (Primates, Platyrrhini): evidence of divergent evolution and purifying selection.</title>
        <authorList>
            <person name="Borges B.N."/>
            <person name="Harada M.L."/>
        </authorList>
    </citation>
    <scope>NUCLEOTIDE SEQUENCE [GENOMIC DNA]</scope>
</reference>
<evidence type="ECO:0000250" key="1">
    <source>
        <dbReference type="UniProtKB" id="F6Q1T7"/>
    </source>
</evidence>
<evidence type="ECO:0000250" key="2">
    <source>
        <dbReference type="UniProtKB" id="O09160"/>
    </source>
</evidence>
<evidence type="ECO:0000250" key="3">
    <source>
        <dbReference type="UniProtKB" id="P19526"/>
    </source>
</evidence>
<evidence type="ECO:0000255" key="4"/>
<evidence type="ECO:0000305" key="5"/>